<keyword id="KW-0027">Amidation</keyword>
<keyword id="KW-0044">Antibiotic</keyword>
<keyword id="KW-0929">Antimicrobial</keyword>
<keyword id="KW-0903">Direct protein sequencing</keyword>
<keyword id="KW-1213">G-protein coupled receptor impairing toxin</keyword>
<keyword id="KW-0391">Immunity</keyword>
<keyword id="KW-0399">Innate immunity</keyword>
<keyword id="KW-0467">Mast cell degranulation</keyword>
<keyword id="KW-0472">Membrane</keyword>
<keyword id="KW-0964">Secreted</keyword>
<keyword id="KW-1052">Target cell membrane</keyword>
<keyword id="KW-1053">Target membrane</keyword>
<keyword id="KW-0800">Toxin</keyword>
<name>MAST1_EUMMI</name>
<feature type="peptide" id="PRO_0000458776" description="Eumenine mastoparan-EM1" evidence="3">
    <location>
        <begin position="1"/>
        <end position="14"/>
    </location>
</feature>
<feature type="modified residue" description="Leucine amide" evidence="3">
    <location>
        <position position="14"/>
    </location>
</feature>
<dbReference type="GO" id="GO:0005576">
    <property type="term" value="C:extracellular region"/>
    <property type="evidence" value="ECO:0007669"/>
    <property type="project" value="UniProtKB-SubCell"/>
</dbReference>
<dbReference type="GO" id="GO:0016020">
    <property type="term" value="C:membrane"/>
    <property type="evidence" value="ECO:0007669"/>
    <property type="project" value="UniProtKB-KW"/>
</dbReference>
<dbReference type="GO" id="GO:0044218">
    <property type="term" value="C:other organism cell membrane"/>
    <property type="evidence" value="ECO:0007669"/>
    <property type="project" value="UniProtKB-KW"/>
</dbReference>
<dbReference type="GO" id="GO:0090729">
    <property type="term" value="F:toxin activity"/>
    <property type="evidence" value="ECO:0007669"/>
    <property type="project" value="UniProtKB-KW"/>
</dbReference>
<dbReference type="GO" id="GO:0042742">
    <property type="term" value="P:defense response to bacterium"/>
    <property type="evidence" value="ECO:0007669"/>
    <property type="project" value="UniProtKB-KW"/>
</dbReference>
<dbReference type="GO" id="GO:0045087">
    <property type="term" value="P:innate immune response"/>
    <property type="evidence" value="ECO:0007669"/>
    <property type="project" value="UniProtKB-KW"/>
</dbReference>
<reference key="1">
    <citation type="journal article" date="2019" name="Toxins">
        <title>New mastoparan peptides in the venom of the solitary Eumenine wasp Eumenes micado.</title>
        <authorList>
            <person name="Konno K."/>
            <person name="Kazuma K."/>
            <person name="Rangel M."/>
            <person name="Stolarz-de-Oliveira J."/>
            <person name="Fontana R."/>
            <person name="Kawano M."/>
            <person name="Fuchino H."/>
            <person name="Hide I."/>
            <person name="Yasuhara T."/>
            <person name="Nakata Y."/>
        </authorList>
    </citation>
    <scope>PROTEIN SEQUENCE</scope>
    <scope>FUNCTION</scope>
    <scope>AMIDATION AT LEU-14</scope>
    <scope>MASS SPECTROMETRY</scope>
    <scope>SUBCELLULAR LOCATION</scope>
    <source>
        <tissue>Venom</tissue>
    </source>
</reference>
<organism>
    <name type="scientific">Eumenes micado</name>
    <name type="common">Potter wasp</name>
    <dbReference type="NCBI Taxonomy" id="2597558"/>
    <lineage>
        <taxon>Eukaryota</taxon>
        <taxon>Metazoa</taxon>
        <taxon>Ecdysozoa</taxon>
        <taxon>Arthropoda</taxon>
        <taxon>Hexapoda</taxon>
        <taxon>Insecta</taxon>
        <taxon>Pterygota</taxon>
        <taxon>Neoptera</taxon>
        <taxon>Endopterygota</taxon>
        <taxon>Hymenoptera</taxon>
        <taxon>Apocrita</taxon>
        <taxon>Aculeata</taxon>
        <taxon>Vespoidea</taxon>
        <taxon>Vespidae</taxon>
        <taxon>Eumeninae</taxon>
        <taxon>Eumenes</taxon>
    </lineage>
</organism>
<proteinExistence type="evidence at protein level"/>
<accession>P0DX31</accession>
<comment type="function">
    <text evidence="1 2 3">Linear cationic alpha-helical peptide that acts as antimicrobial peptide (PubMed:30857348). Has antibacterial activities against both Gram-positive and Gram-negative strains (PubMed:30857348). Has no activity against the yeast C.albicans (PubMed:30857348). Shows moderate mast cell degranulation, as well as leishmanicidal activities (IC(50)=36 uM) (PubMed:30857348). Has no hemolytic activity (PubMed:30857348). Its mast cell degranulation activity may be related to the activation of G-protein coupled receptors in mast cells as well as interaction with other proteins located in cell endosomal membranes in the mast cells (By similarity).</text>
</comment>
<comment type="subcellular location">
    <subcellularLocation>
        <location evidence="3">Secreted</location>
    </subcellularLocation>
    <subcellularLocation>
        <location evidence="5">Target cell membrane</location>
    </subcellularLocation>
    <text evidence="6">Has an amphipathic alpha-helical conformation.</text>
</comment>
<comment type="tissue specificity">
    <text evidence="6">Expressed by the venom gland.</text>
</comment>
<comment type="mass spectrometry" mass="1481.99" method="Electrospray" evidence="3"/>
<comment type="similarity">
    <text evidence="5">Belongs to the MCD family. Mastoparan subfamily.</text>
</comment>
<evidence type="ECO:0000250" key="1">
    <source>
        <dbReference type="UniProtKB" id="P01514"/>
    </source>
</evidence>
<evidence type="ECO:0000250" key="2">
    <source>
        <dbReference type="UniProtKB" id="P84914"/>
    </source>
</evidence>
<evidence type="ECO:0000269" key="3">
    <source>
    </source>
</evidence>
<evidence type="ECO:0000303" key="4">
    <source>
    </source>
</evidence>
<evidence type="ECO:0000305" key="5"/>
<evidence type="ECO:0000305" key="6">
    <source>
    </source>
</evidence>
<protein>
    <recommendedName>
        <fullName evidence="4">Eumenine mastoparan-EM1</fullName>
        <shortName evidence="4">EMP-EM1</shortName>
    </recommendedName>
</protein>
<sequence length="14" mass="1483">LKLMGIVKKVLGAL</sequence>